<evidence type="ECO:0000255" key="1">
    <source>
        <dbReference type="HAMAP-Rule" id="MF_01146"/>
    </source>
</evidence>
<evidence type="ECO:0000305" key="2"/>
<accession>Q92NM3</accession>
<comment type="function">
    <text evidence="1">Channel that permits osmotically driven movement of water in both directions. It is involved in the osmoregulation and in the maintenance of cell turgor during volume expansion in rapidly growing cells. It mediates rapid entry or exit of water in response to abrupt changes in osmolarity.</text>
</comment>
<comment type="catalytic activity">
    <reaction evidence="1">
        <text>H2O(in) = H2O(out)</text>
        <dbReference type="Rhea" id="RHEA:29667"/>
        <dbReference type="ChEBI" id="CHEBI:15377"/>
    </reaction>
    <physiologicalReaction direction="left-to-right" evidence="1">
        <dbReference type="Rhea" id="RHEA:29668"/>
    </physiologicalReaction>
    <physiologicalReaction direction="right-to-left" evidence="1">
        <dbReference type="Rhea" id="RHEA:29669"/>
    </physiologicalReaction>
</comment>
<comment type="subunit">
    <text evidence="1">Homotetramer.</text>
</comment>
<comment type="subcellular location">
    <subcellularLocation>
        <location evidence="1">Cell inner membrane</location>
        <topology evidence="1">Multi-pass membrane protein</topology>
    </subcellularLocation>
</comment>
<comment type="domain">
    <text evidence="1">Aquaporins contain two tandem repeats each containing three membrane-spanning domains and a pore-forming loop with the signature motif Asn-Pro-Ala (NPA).</text>
</comment>
<comment type="similarity">
    <text evidence="1 2">Belongs to the MIP/aquaporin (TC 1.A.8) family.</text>
</comment>
<sequence length="228" mass="23177">MFRKLSVEFLGTFWLVLGGCGSAVLAAAFPEVGIGLLGVSFAFGLTVLTMAYAVGGISGGHFNPAVSVGLAVAGRMPPASLVGYILAQVTGAIAAAAVLYVIASGKADFQLGGFAANGYGEHSPGGYSLTAALVTEVVMTAFFLLIILGSTHSRVPVGFAPIAIGLGLTLIHLVSIPVTNTSVNPARSTGQALFVGDWAISQLWLFWVAPLIGAVIAGIVWKIVGDDS</sequence>
<keyword id="KW-0997">Cell inner membrane</keyword>
<keyword id="KW-1003">Cell membrane</keyword>
<keyword id="KW-0472">Membrane</keyword>
<keyword id="KW-1185">Reference proteome</keyword>
<keyword id="KW-0677">Repeat</keyword>
<keyword id="KW-0812">Transmembrane</keyword>
<keyword id="KW-1133">Transmembrane helix</keyword>
<keyword id="KW-0813">Transport</keyword>
<protein>
    <recommendedName>
        <fullName evidence="1">Aquaporin Z 1</fullName>
    </recommendedName>
</protein>
<feature type="chain" id="PRO_0000063996" description="Aquaporin Z 1">
    <location>
        <begin position="1"/>
        <end position="228"/>
    </location>
</feature>
<feature type="transmembrane region" description="Helical" evidence="1">
    <location>
        <begin position="9"/>
        <end position="29"/>
    </location>
</feature>
<feature type="transmembrane region" description="Helical" evidence="1">
    <location>
        <begin position="34"/>
        <end position="54"/>
    </location>
</feature>
<feature type="transmembrane region" description="Helical" evidence="1">
    <location>
        <begin position="82"/>
        <end position="102"/>
    </location>
</feature>
<feature type="transmembrane region" description="Helical" evidence="1">
    <location>
        <begin position="129"/>
        <end position="149"/>
    </location>
</feature>
<feature type="transmembrane region" description="Helical" evidence="1">
    <location>
        <begin position="156"/>
        <end position="176"/>
    </location>
</feature>
<feature type="transmembrane region" description="Helical" evidence="1">
    <location>
        <begin position="204"/>
        <end position="224"/>
    </location>
</feature>
<feature type="short sequence motif" description="NPA 1" evidence="1">
    <location>
        <begin position="63"/>
        <end position="65"/>
    </location>
</feature>
<feature type="short sequence motif" description="NPA 2" evidence="1">
    <location>
        <begin position="184"/>
        <end position="186"/>
    </location>
</feature>
<feature type="site" description="Involved in tetramerization or stability of the tetramer" evidence="1">
    <location>
        <position position="20"/>
    </location>
</feature>
<feature type="site" description="Selectivity filter" evidence="1">
    <location>
        <position position="43"/>
    </location>
</feature>
<feature type="site" description="Selectivity filter" evidence="1">
    <location>
        <position position="172"/>
    </location>
</feature>
<feature type="site" description="Selectivity filter" evidence="1">
    <location>
        <position position="181"/>
    </location>
</feature>
<feature type="site" description="Selectivity filter" evidence="1">
    <location>
        <position position="187"/>
    </location>
</feature>
<organism>
    <name type="scientific">Rhizobium meliloti (strain 1021)</name>
    <name type="common">Ensifer meliloti</name>
    <name type="synonym">Sinorhizobium meliloti</name>
    <dbReference type="NCBI Taxonomy" id="266834"/>
    <lineage>
        <taxon>Bacteria</taxon>
        <taxon>Pseudomonadati</taxon>
        <taxon>Pseudomonadota</taxon>
        <taxon>Alphaproteobacteria</taxon>
        <taxon>Hyphomicrobiales</taxon>
        <taxon>Rhizobiaceae</taxon>
        <taxon>Sinorhizobium/Ensifer group</taxon>
        <taxon>Sinorhizobium</taxon>
    </lineage>
</organism>
<gene>
    <name evidence="1" type="primary">aqpZ1</name>
    <name type="ordered locus">R02172</name>
    <name type="ORF">SMc01870</name>
</gene>
<dbReference type="EMBL" id="AL591688">
    <property type="protein sequence ID" value="CAC46751.1"/>
    <property type="molecule type" value="Genomic_DNA"/>
</dbReference>
<dbReference type="RefSeq" id="NP_386278.1">
    <property type="nucleotide sequence ID" value="NC_003047.1"/>
</dbReference>
<dbReference type="SMR" id="Q92NM3"/>
<dbReference type="EnsemblBacteria" id="CAC46751">
    <property type="protein sequence ID" value="CAC46751"/>
    <property type="gene ID" value="SMc01870"/>
</dbReference>
<dbReference type="KEGG" id="sme:SMc01870"/>
<dbReference type="PATRIC" id="fig|266834.11.peg.3638"/>
<dbReference type="eggNOG" id="COG0580">
    <property type="taxonomic scope" value="Bacteria"/>
</dbReference>
<dbReference type="HOGENOM" id="CLU_020019_3_2_5"/>
<dbReference type="OrthoDB" id="9807293at2"/>
<dbReference type="Proteomes" id="UP000001976">
    <property type="component" value="Chromosome"/>
</dbReference>
<dbReference type="GO" id="GO:0005886">
    <property type="term" value="C:plasma membrane"/>
    <property type="evidence" value="ECO:0007669"/>
    <property type="project" value="UniProtKB-SubCell"/>
</dbReference>
<dbReference type="GO" id="GO:0015250">
    <property type="term" value="F:water channel activity"/>
    <property type="evidence" value="ECO:0007669"/>
    <property type="project" value="UniProtKB-UniRule"/>
</dbReference>
<dbReference type="CDD" id="cd00333">
    <property type="entry name" value="MIP"/>
    <property type="match status" value="1"/>
</dbReference>
<dbReference type="FunFam" id="1.20.1080.10:FF:000007">
    <property type="entry name" value="Aquaporin Z"/>
    <property type="match status" value="1"/>
</dbReference>
<dbReference type="Gene3D" id="1.20.1080.10">
    <property type="entry name" value="Glycerol uptake facilitator protein"/>
    <property type="match status" value="1"/>
</dbReference>
<dbReference type="HAMAP" id="MF_01146">
    <property type="entry name" value="Aquaporin_Z"/>
    <property type="match status" value="1"/>
</dbReference>
<dbReference type="InterPro" id="IPR023271">
    <property type="entry name" value="Aquaporin-like"/>
</dbReference>
<dbReference type="InterPro" id="IPR034294">
    <property type="entry name" value="Aquaporin_transptr"/>
</dbReference>
<dbReference type="InterPro" id="IPR023743">
    <property type="entry name" value="Aquaporin_Z"/>
</dbReference>
<dbReference type="InterPro" id="IPR000425">
    <property type="entry name" value="MIP"/>
</dbReference>
<dbReference type="InterPro" id="IPR022357">
    <property type="entry name" value="MIP_CS"/>
</dbReference>
<dbReference type="NCBIfam" id="TIGR00861">
    <property type="entry name" value="MIP"/>
    <property type="match status" value="1"/>
</dbReference>
<dbReference type="NCBIfam" id="NF003838">
    <property type="entry name" value="PRK05420.1"/>
    <property type="match status" value="1"/>
</dbReference>
<dbReference type="PANTHER" id="PTHR19139">
    <property type="entry name" value="AQUAPORIN TRANSPORTER"/>
    <property type="match status" value="1"/>
</dbReference>
<dbReference type="PANTHER" id="PTHR19139:SF199">
    <property type="entry name" value="MIP17260P"/>
    <property type="match status" value="1"/>
</dbReference>
<dbReference type="Pfam" id="PF00230">
    <property type="entry name" value="MIP"/>
    <property type="match status" value="1"/>
</dbReference>
<dbReference type="PRINTS" id="PR00783">
    <property type="entry name" value="MINTRINSICP"/>
</dbReference>
<dbReference type="SUPFAM" id="SSF81338">
    <property type="entry name" value="Aquaporin-like"/>
    <property type="match status" value="1"/>
</dbReference>
<dbReference type="PROSITE" id="PS00221">
    <property type="entry name" value="MIP"/>
    <property type="match status" value="1"/>
</dbReference>
<proteinExistence type="inferred from homology"/>
<reference key="1">
    <citation type="journal article" date="2001" name="Proc. Natl. Acad. Sci. U.S.A.">
        <title>Analysis of the chromosome sequence of the legume symbiont Sinorhizobium meliloti strain 1021.</title>
        <authorList>
            <person name="Capela D."/>
            <person name="Barloy-Hubler F."/>
            <person name="Gouzy J."/>
            <person name="Bothe G."/>
            <person name="Ampe F."/>
            <person name="Batut J."/>
            <person name="Boistard P."/>
            <person name="Becker A."/>
            <person name="Boutry M."/>
            <person name="Cadieu E."/>
            <person name="Dreano S."/>
            <person name="Gloux S."/>
            <person name="Godrie T."/>
            <person name="Goffeau A."/>
            <person name="Kahn D."/>
            <person name="Kiss E."/>
            <person name="Lelaure V."/>
            <person name="Masuy D."/>
            <person name="Pohl T."/>
            <person name="Portetelle D."/>
            <person name="Puehler A."/>
            <person name="Purnelle B."/>
            <person name="Ramsperger U."/>
            <person name="Renard C."/>
            <person name="Thebault P."/>
            <person name="Vandenbol M."/>
            <person name="Weidner S."/>
            <person name="Galibert F."/>
        </authorList>
    </citation>
    <scope>NUCLEOTIDE SEQUENCE [LARGE SCALE GENOMIC DNA]</scope>
    <source>
        <strain>1021</strain>
    </source>
</reference>
<reference key="2">
    <citation type="journal article" date="2001" name="Science">
        <title>The composite genome of the legume symbiont Sinorhizobium meliloti.</title>
        <authorList>
            <person name="Galibert F."/>
            <person name="Finan T.M."/>
            <person name="Long S.R."/>
            <person name="Puehler A."/>
            <person name="Abola P."/>
            <person name="Ampe F."/>
            <person name="Barloy-Hubler F."/>
            <person name="Barnett M.J."/>
            <person name="Becker A."/>
            <person name="Boistard P."/>
            <person name="Bothe G."/>
            <person name="Boutry M."/>
            <person name="Bowser L."/>
            <person name="Buhrmester J."/>
            <person name="Cadieu E."/>
            <person name="Capela D."/>
            <person name="Chain P."/>
            <person name="Cowie A."/>
            <person name="Davis R.W."/>
            <person name="Dreano S."/>
            <person name="Federspiel N.A."/>
            <person name="Fisher R.F."/>
            <person name="Gloux S."/>
            <person name="Godrie T."/>
            <person name="Goffeau A."/>
            <person name="Golding B."/>
            <person name="Gouzy J."/>
            <person name="Gurjal M."/>
            <person name="Hernandez-Lucas I."/>
            <person name="Hong A."/>
            <person name="Huizar L."/>
            <person name="Hyman R.W."/>
            <person name="Jones T."/>
            <person name="Kahn D."/>
            <person name="Kahn M.L."/>
            <person name="Kalman S."/>
            <person name="Keating D.H."/>
            <person name="Kiss E."/>
            <person name="Komp C."/>
            <person name="Lelaure V."/>
            <person name="Masuy D."/>
            <person name="Palm C."/>
            <person name="Peck M.C."/>
            <person name="Pohl T.M."/>
            <person name="Portetelle D."/>
            <person name="Purnelle B."/>
            <person name="Ramsperger U."/>
            <person name="Surzycki R."/>
            <person name="Thebault P."/>
            <person name="Vandenbol M."/>
            <person name="Vorhoelter F.J."/>
            <person name="Weidner S."/>
            <person name="Wells D.H."/>
            <person name="Wong K."/>
            <person name="Yeh K.-C."/>
            <person name="Batut J."/>
        </authorList>
    </citation>
    <scope>NUCLEOTIDE SEQUENCE [LARGE SCALE GENOMIC DNA]</scope>
    <source>
        <strain>1021</strain>
    </source>
</reference>
<name>AQPZ1_RHIME</name>